<feature type="chain" id="PRO_0000461477" description="Protein PHOTOPERIODIC CONTROL OF HYPOCOTYL 1-LIKE">
    <location>
        <begin position="1"/>
        <end position="279"/>
    </location>
</feature>
<proteinExistence type="evidence at protein level"/>
<protein>
    <recommendedName>
        <fullName evidence="3 4">Protein PHOTOPERIODIC CONTROL OF HYPOCOTYL 1-LIKE</fullName>
        <shortName evidence="3 4">Protein PCH1-LIKE</shortName>
    </recommendedName>
</protein>
<accession>O65680</accession>
<dbReference type="EMBL" id="AL023094">
    <property type="protein sequence ID" value="CAA18834.1"/>
    <property type="molecule type" value="Genomic_DNA"/>
</dbReference>
<dbReference type="EMBL" id="AL161585">
    <property type="protein sequence ID" value="CAB80172.1"/>
    <property type="molecule type" value="Genomic_DNA"/>
</dbReference>
<dbReference type="EMBL" id="CP002687">
    <property type="protein sequence ID" value="AEE86391.1"/>
    <property type="molecule type" value="Genomic_DNA"/>
</dbReference>
<dbReference type="EMBL" id="CP002687">
    <property type="protein sequence ID" value="ANM67727.1"/>
    <property type="molecule type" value="Genomic_DNA"/>
</dbReference>
<dbReference type="EMBL" id="BT033126">
    <property type="protein sequence ID" value="ACF22902.1"/>
    <property type="molecule type" value="mRNA"/>
</dbReference>
<dbReference type="PIR" id="T05275">
    <property type="entry name" value="T05275"/>
</dbReference>
<dbReference type="RefSeq" id="NP_001320137.1">
    <property type="nucleotide sequence ID" value="NM_001342288.1"/>
</dbReference>
<dbReference type="RefSeq" id="NP_195181.1">
    <property type="nucleotide sequence ID" value="NM_119620.2"/>
</dbReference>
<dbReference type="STRING" id="3702.O65680"/>
<dbReference type="iPTMnet" id="O65680"/>
<dbReference type="PaxDb" id="3702-AT4G34550.1"/>
<dbReference type="ProteomicsDB" id="183568"/>
<dbReference type="EnsemblPlants" id="AT4G34550.1">
    <property type="protein sequence ID" value="AT4G34550.1"/>
    <property type="gene ID" value="AT4G34550"/>
</dbReference>
<dbReference type="EnsemblPlants" id="AT4G34550.2">
    <property type="protein sequence ID" value="AT4G34550.2"/>
    <property type="gene ID" value="AT4G34550"/>
</dbReference>
<dbReference type="GeneID" id="829606"/>
<dbReference type="Gramene" id="AT4G34550.1">
    <property type="protein sequence ID" value="AT4G34550.1"/>
    <property type="gene ID" value="AT4G34550"/>
</dbReference>
<dbReference type="Gramene" id="AT4G34550.2">
    <property type="protein sequence ID" value="AT4G34550.2"/>
    <property type="gene ID" value="AT4G34550"/>
</dbReference>
<dbReference type="KEGG" id="ath:AT4G34550"/>
<dbReference type="Araport" id="AT4G34550"/>
<dbReference type="TAIR" id="AT4G34550"/>
<dbReference type="HOGENOM" id="CLU_087105_0_0_1"/>
<dbReference type="OMA" id="CKRIWSD"/>
<dbReference type="OrthoDB" id="649277at2759"/>
<dbReference type="Proteomes" id="UP000006548">
    <property type="component" value="Chromosome 4"/>
</dbReference>
<dbReference type="ExpressionAtlas" id="O65680">
    <property type="expression patterns" value="baseline and differential"/>
</dbReference>
<dbReference type="GO" id="GO:0005634">
    <property type="term" value="C:nucleus"/>
    <property type="evidence" value="ECO:0000314"/>
    <property type="project" value="UniProtKB"/>
</dbReference>
<dbReference type="GO" id="GO:0010017">
    <property type="term" value="P:red or far-red light signaling pathway"/>
    <property type="evidence" value="ECO:0000315"/>
    <property type="project" value="UniProtKB"/>
</dbReference>
<dbReference type="GO" id="GO:0010099">
    <property type="term" value="P:regulation of photomorphogenesis"/>
    <property type="evidence" value="ECO:0000315"/>
    <property type="project" value="UniProtKB"/>
</dbReference>
<dbReference type="GO" id="GO:0090227">
    <property type="term" value="P:regulation of red or far-red light signaling pathway"/>
    <property type="evidence" value="ECO:0000315"/>
    <property type="project" value="UniProtKB"/>
</dbReference>
<dbReference type="GO" id="GO:0009637">
    <property type="term" value="P:response to blue light"/>
    <property type="evidence" value="ECO:0000270"/>
    <property type="project" value="UniProtKB"/>
</dbReference>
<dbReference type="GO" id="GO:0010218">
    <property type="term" value="P:response to far red light"/>
    <property type="evidence" value="ECO:0000270"/>
    <property type="project" value="UniProtKB"/>
</dbReference>
<dbReference type="GO" id="GO:0010114">
    <property type="term" value="P:response to red light"/>
    <property type="evidence" value="ECO:0000315"/>
    <property type="project" value="UniProtKB"/>
</dbReference>
<dbReference type="InterPro" id="IPR037476">
    <property type="entry name" value="PCH1"/>
</dbReference>
<dbReference type="PANTHER" id="PTHR36062">
    <property type="entry name" value="OS01G0687300 PROTEIN"/>
    <property type="match status" value="1"/>
</dbReference>
<dbReference type="PANTHER" id="PTHR36062:SF1">
    <property type="entry name" value="OS01G0687300 PROTEIN"/>
    <property type="match status" value="1"/>
</dbReference>
<comment type="function">
    <text evidence="1 2">Together with PCH1, regulates growth and development adaptation to the ambient environment by controlling negatively phytochrome B (phyB) dark reversion, a temperature-dependent thermal relaxation process during which phyB reverts from the active to the inactive state (PubMed:29263319, PubMed:32061894). Contributes to red (R) light-triggered photomorphogenesis (PubMed:29263319). Promotes various light responses such as seed germination, hypocotyl gravitropism and chlorophyll biosynthesis, via direct interaction with PIF1 and COP1 (PubMed:32061894). Prevents DNA-binding ability of PIF1 to negatively regulate the expressions of its target genes (PubMed:32061894). Facilitates the physical interaction between phyB and PIF1 and the subsequent light-induced degradation of PIF1 (PubMed:32061894).</text>
</comment>
<comment type="subunit">
    <text evidence="1 2">Interacts with light-activated phyB (PubMed:29263319). Binds directly to PIF1 and COP1 (PubMed:32061894).</text>
</comment>
<comment type="subcellular location">
    <subcellularLocation>
        <location evidence="1">Nucleus</location>
    </subcellularLocation>
    <text evidence="1">Observed in subnuclear light-induced structures called photobodies.</text>
</comment>
<comment type="tissue specificity">
    <text evidence="1">Mainly expressed in cotyledons, hypocotyls, leaves.</text>
</comment>
<comment type="induction">
    <text evidence="1 2">Induced by far-red (FR) and blue (B) lights, as well as transiently following transition from darkness to red light (R) in a phyB-independent manner; responses to red and far-red lights depend on phyA, and responses to blue light rely on both phyA and cryptochromes (PubMed:29263319). In the dark, binds to COP1 and undergo degradation through the 26S proteasome pathway (PubMed:32061894).</text>
</comment>
<comment type="PTM">
    <text evidence="2">Ubiquitinated by COP1 in darkness; this leads to proteasomal degradation.</text>
</comment>
<comment type="disruption phenotype">
    <text evidence="1 2">Reduced seed germination in red (R) light; this phenotype is reversed in plants lacking PIF1 (PubMed:32061894). Reduced PIF1 degradation in response to red light pulse (PubMed:32061894). Hypersensitivity to gravity stimulus and increased greening (PubMed:32061894). Increased hypocotyl growth independently of far-red (FR) pulse at light-off, as the result of a rapid loss of active phyB due to increased dark reversion (PubMed:29263319). Highly unstable phyB-containing photobodies in plants lacking both PCH1 and PCHL (PubMed:29263319).</text>
</comment>
<organism>
    <name type="scientific">Arabidopsis thaliana</name>
    <name type="common">Mouse-ear cress</name>
    <dbReference type="NCBI Taxonomy" id="3702"/>
    <lineage>
        <taxon>Eukaryota</taxon>
        <taxon>Viridiplantae</taxon>
        <taxon>Streptophyta</taxon>
        <taxon>Embryophyta</taxon>
        <taxon>Tracheophyta</taxon>
        <taxon>Spermatophyta</taxon>
        <taxon>Magnoliopsida</taxon>
        <taxon>eudicotyledons</taxon>
        <taxon>Gunneridae</taxon>
        <taxon>Pentapetalae</taxon>
        <taxon>rosids</taxon>
        <taxon>malvids</taxon>
        <taxon>Brassicales</taxon>
        <taxon>Brassicaceae</taxon>
        <taxon>Camelineae</taxon>
        <taxon>Arabidopsis</taxon>
    </lineage>
</organism>
<evidence type="ECO:0000269" key="1">
    <source>
    </source>
</evidence>
<evidence type="ECO:0000269" key="2">
    <source>
    </source>
</evidence>
<evidence type="ECO:0000303" key="3">
    <source>
    </source>
</evidence>
<evidence type="ECO:0000303" key="4">
    <source>
    </source>
</evidence>
<evidence type="ECO:0000312" key="5">
    <source>
        <dbReference type="Araport" id="AT4G34550"/>
    </source>
</evidence>
<evidence type="ECO:0000312" key="6">
    <source>
        <dbReference type="EMBL" id="CAA18834.1"/>
    </source>
</evidence>
<reference key="1">
    <citation type="journal article" date="1999" name="Nature">
        <title>Sequence and analysis of chromosome 4 of the plant Arabidopsis thaliana.</title>
        <authorList>
            <person name="Mayer K.F.X."/>
            <person name="Schueller C."/>
            <person name="Wambutt R."/>
            <person name="Murphy G."/>
            <person name="Volckaert G."/>
            <person name="Pohl T."/>
            <person name="Duesterhoeft A."/>
            <person name="Stiekema W."/>
            <person name="Entian K.-D."/>
            <person name="Terryn N."/>
            <person name="Harris B."/>
            <person name="Ansorge W."/>
            <person name="Brandt P."/>
            <person name="Grivell L.A."/>
            <person name="Rieger M."/>
            <person name="Weichselgartner M."/>
            <person name="de Simone V."/>
            <person name="Obermaier B."/>
            <person name="Mache R."/>
            <person name="Mueller M."/>
            <person name="Kreis M."/>
            <person name="Delseny M."/>
            <person name="Puigdomenech P."/>
            <person name="Watson M."/>
            <person name="Schmidtheini T."/>
            <person name="Reichert B."/>
            <person name="Portetelle D."/>
            <person name="Perez-Alonso M."/>
            <person name="Boutry M."/>
            <person name="Bancroft I."/>
            <person name="Vos P."/>
            <person name="Hoheisel J."/>
            <person name="Zimmermann W."/>
            <person name="Wedler H."/>
            <person name="Ridley P."/>
            <person name="Langham S.-A."/>
            <person name="McCullagh B."/>
            <person name="Bilham L."/>
            <person name="Robben J."/>
            <person name="van der Schueren J."/>
            <person name="Grymonprez B."/>
            <person name="Chuang Y.-J."/>
            <person name="Vandenbussche F."/>
            <person name="Braeken M."/>
            <person name="Weltjens I."/>
            <person name="Voet M."/>
            <person name="Bastiaens I."/>
            <person name="Aert R."/>
            <person name="Defoor E."/>
            <person name="Weitzenegger T."/>
            <person name="Bothe G."/>
            <person name="Ramsperger U."/>
            <person name="Hilbert H."/>
            <person name="Braun M."/>
            <person name="Holzer E."/>
            <person name="Brandt A."/>
            <person name="Peters S."/>
            <person name="van Staveren M."/>
            <person name="Dirkse W."/>
            <person name="Mooijman P."/>
            <person name="Klein Lankhorst R."/>
            <person name="Rose M."/>
            <person name="Hauf J."/>
            <person name="Koetter P."/>
            <person name="Berneiser S."/>
            <person name="Hempel S."/>
            <person name="Feldpausch M."/>
            <person name="Lamberth S."/>
            <person name="Van den Daele H."/>
            <person name="De Keyser A."/>
            <person name="Buysshaert C."/>
            <person name="Gielen J."/>
            <person name="Villarroel R."/>
            <person name="De Clercq R."/>
            <person name="van Montagu M."/>
            <person name="Rogers J."/>
            <person name="Cronin A."/>
            <person name="Quail M.A."/>
            <person name="Bray-Allen S."/>
            <person name="Clark L."/>
            <person name="Doggett J."/>
            <person name="Hall S."/>
            <person name="Kay M."/>
            <person name="Lennard N."/>
            <person name="McLay K."/>
            <person name="Mayes R."/>
            <person name="Pettett A."/>
            <person name="Rajandream M.A."/>
            <person name="Lyne M."/>
            <person name="Benes V."/>
            <person name="Rechmann S."/>
            <person name="Borkova D."/>
            <person name="Bloecker H."/>
            <person name="Scharfe M."/>
            <person name="Grimm M."/>
            <person name="Loehnert T.-H."/>
            <person name="Dose S."/>
            <person name="de Haan M."/>
            <person name="Maarse A.C."/>
            <person name="Schaefer M."/>
            <person name="Mueller-Auer S."/>
            <person name="Gabel C."/>
            <person name="Fuchs M."/>
            <person name="Fartmann B."/>
            <person name="Granderath K."/>
            <person name="Dauner D."/>
            <person name="Herzl A."/>
            <person name="Neumann S."/>
            <person name="Argiriou A."/>
            <person name="Vitale D."/>
            <person name="Liguori R."/>
            <person name="Piravandi E."/>
            <person name="Massenet O."/>
            <person name="Quigley F."/>
            <person name="Clabauld G."/>
            <person name="Muendlein A."/>
            <person name="Felber R."/>
            <person name="Schnabl S."/>
            <person name="Hiller R."/>
            <person name="Schmidt W."/>
            <person name="Lecharny A."/>
            <person name="Aubourg S."/>
            <person name="Chefdor F."/>
            <person name="Cooke R."/>
            <person name="Berger C."/>
            <person name="Monfort A."/>
            <person name="Casacuberta E."/>
            <person name="Gibbons T."/>
            <person name="Weber N."/>
            <person name="Vandenbol M."/>
            <person name="Bargues M."/>
            <person name="Terol J."/>
            <person name="Torres A."/>
            <person name="Perez-Perez A."/>
            <person name="Purnelle B."/>
            <person name="Bent E."/>
            <person name="Johnson S."/>
            <person name="Tacon D."/>
            <person name="Jesse T."/>
            <person name="Heijnen L."/>
            <person name="Schwarz S."/>
            <person name="Scholler P."/>
            <person name="Heber S."/>
            <person name="Francs P."/>
            <person name="Bielke C."/>
            <person name="Frishman D."/>
            <person name="Haase D."/>
            <person name="Lemcke K."/>
            <person name="Mewes H.-W."/>
            <person name="Stocker S."/>
            <person name="Zaccaria P."/>
            <person name="Bevan M."/>
            <person name="Wilson R.K."/>
            <person name="de la Bastide M."/>
            <person name="Habermann K."/>
            <person name="Parnell L."/>
            <person name="Dedhia N."/>
            <person name="Gnoj L."/>
            <person name="Schutz K."/>
            <person name="Huang E."/>
            <person name="Spiegel L."/>
            <person name="Sekhon M."/>
            <person name="Murray J."/>
            <person name="Sheet P."/>
            <person name="Cordes M."/>
            <person name="Abu-Threideh J."/>
            <person name="Stoneking T."/>
            <person name="Kalicki J."/>
            <person name="Graves T."/>
            <person name="Harmon G."/>
            <person name="Edwards J."/>
            <person name="Latreille P."/>
            <person name="Courtney L."/>
            <person name="Cloud J."/>
            <person name="Abbott A."/>
            <person name="Scott K."/>
            <person name="Johnson D."/>
            <person name="Minx P."/>
            <person name="Bentley D."/>
            <person name="Fulton B."/>
            <person name="Miller N."/>
            <person name="Greco T."/>
            <person name="Kemp K."/>
            <person name="Kramer J."/>
            <person name="Fulton L."/>
            <person name="Mardis E."/>
            <person name="Dante M."/>
            <person name="Pepin K."/>
            <person name="Hillier L.W."/>
            <person name="Nelson J."/>
            <person name="Spieth J."/>
            <person name="Ryan E."/>
            <person name="Andrews S."/>
            <person name="Geisel C."/>
            <person name="Layman D."/>
            <person name="Du H."/>
            <person name="Ali J."/>
            <person name="Berghoff A."/>
            <person name="Jones K."/>
            <person name="Drone K."/>
            <person name="Cotton M."/>
            <person name="Joshu C."/>
            <person name="Antonoiu B."/>
            <person name="Zidanic M."/>
            <person name="Strong C."/>
            <person name="Sun H."/>
            <person name="Lamar B."/>
            <person name="Yordan C."/>
            <person name="Ma P."/>
            <person name="Zhong J."/>
            <person name="Preston R."/>
            <person name="Vil D."/>
            <person name="Shekher M."/>
            <person name="Matero A."/>
            <person name="Shah R."/>
            <person name="Swaby I.K."/>
            <person name="O'Shaughnessy A."/>
            <person name="Rodriguez M."/>
            <person name="Hoffman J."/>
            <person name="Till S."/>
            <person name="Granat S."/>
            <person name="Shohdy N."/>
            <person name="Hasegawa A."/>
            <person name="Hameed A."/>
            <person name="Lodhi M."/>
            <person name="Johnson A."/>
            <person name="Chen E."/>
            <person name="Marra M.A."/>
            <person name="Martienssen R."/>
            <person name="McCombie W.R."/>
        </authorList>
    </citation>
    <scope>NUCLEOTIDE SEQUENCE [LARGE SCALE GENOMIC DNA]</scope>
    <source>
        <strain>cv. Columbia</strain>
    </source>
</reference>
<reference key="2">
    <citation type="journal article" date="2017" name="Plant J.">
        <title>Araport11: a complete reannotation of the Arabidopsis thaliana reference genome.</title>
        <authorList>
            <person name="Cheng C.Y."/>
            <person name="Krishnakumar V."/>
            <person name="Chan A.P."/>
            <person name="Thibaud-Nissen F."/>
            <person name="Schobel S."/>
            <person name="Town C.D."/>
        </authorList>
    </citation>
    <scope>GENOME REANNOTATION</scope>
    <source>
        <strain>cv. Columbia</strain>
    </source>
</reference>
<reference key="3">
    <citation type="submission" date="2008-07" db="EMBL/GenBank/DDBJ databases">
        <title>Arabidopsis ORF clones.</title>
        <authorList>
            <person name="de los Reyes C."/>
            <person name="Quan R."/>
            <person name="Chen H."/>
            <person name="Bautista V."/>
            <person name="Kim C.J."/>
            <person name="Ecker J.R."/>
        </authorList>
    </citation>
    <scope>NUCLEOTIDE SEQUENCE [LARGE SCALE MRNA]</scope>
    <source>
        <strain>cv. Columbia</strain>
    </source>
</reference>
<reference key="4">
    <citation type="journal article" date="2017" name="Nat. Commun.">
        <title>PCH1 and PCHL promote photomorphogenesis in plants by controlling phytochrome B dark reversion.</title>
        <authorList>
            <person name="Enderle B."/>
            <person name="Sheerin D.J."/>
            <person name="Paik I."/>
            <person name="Kathare P.K."/>
            <person name="Schwenk P."/>
            <person name="Klose C."/>
            <person name="Ulbrich M.H."/>
            <person name="Huq E."/>
            <person name="Hiltbrunner A."/>
        </authorList>
    </citation>
    <scope>FUNCTION</scope>
    <scope>DISRUPTION PHENOTYPE</scope>
    <scope>INDUCTION BY FAR-RED AND BLUE LIGHTS</scope>
    <scope>INTERACTION WITH LIGHT-ACTIVATED PHYB</scope>
    <scope>SUBCELLULAR LOCATION</scope>
    <scope>TISSUE SPECIFICITY</scope>
    <source>
        <strain>cv. Columbia</strain>
    </source>
</reference>
<reference key="5">
    <citation type="journal article" date="2020" name="Mol. Plant">
        <title>PCH1 and PCHL directly interact with PIF1, promote its degradation, and inhibit its transcriptional function during photomorphogenesis.</title>
        <authorList>
            <person name="Cheng M.-C."/>
            <person name="Enderle B."/>
            <person name="Kathare P.K."/>
            <person name="Islam R."/>
            <person name="Hiltbrunner A."/>
            <person name="Huq E."/>
        </authorList>
    </citation>
    <scope>FUNCTION</scope>
    <scope>DISRUPTION PHENOTYPE</scope>
    <scope>INTERACTION WITH PIF1 AND COP1</scope>
    <scope>REPRESSION BY DARKNESS</scope>
    <scope>UBIQUITINATION</scope>
    <source>
        <strain>cv. Columbia</strain>
    </source>
</reference>
<keyword id="KW-0539">Nucleus</keyword>
<keyword id="KW-1185">Reference proteome</keyword>
<keyword id="KW-0832">Ubl conjugation</keyword>
<name>PCHL_ARATH</name>
<gene>
    <name evidence="3 4" type="primary">PCHL</name>
    <name evidence="5" type="ordered locus">At4g34550</name>
    <name evidence="6" type="ORF">T4L20.130</name>
</gene>
<sequence>MSEHFMGLSKIKTESCVHGYESAWLSRWTPSNKNAKEIHLPEDGHLLKESTGPMKLKGKMLTLFPNLDSPVQSVDVIPDMNKEPPIVADRENSIDGEEEEASSQATQSKNVEHFLNNNTNLLRECKRIWSDSETNSRSQVKRLKTNAADNRGNETKNMMVFEEGPSGKKVNHFFHSIFGMTNLGSRRYQKFSTSQNKNLNMGEAEDVNPWIQRWCKRKAADVHEPRGGQEVNSNGTVLEKQQFPSIAAMAMMRKALSGINPTGCRKTNSLFVWNAEDLS</sequence>